<sequence>MSRKREMPDGGAKSVLSDLRFGRFVGRIRRSRHPALLLLALFVAACWLTWVNFSVALPRSQWQQAIWSPDIDIIEQMIFHYSQLPRLAISLLVGAGLGLVGVLFQQVLRNPLAEPTTLGVATGAQLGITVTTLWAIPGALTTQFAALTGACIVGALVFGVAWGKRLSPVTLILAGLVVSLYCGAINQLLVIFHHDQLQSMFLWSTGTLTQTDWSGVQRLWPQLLGGVMLTLLLLRPMTLMGLDDGVARNLGLALSLARLAALSLAIVLSALLVNAVGIIGFIGLFAPLLAKMLGARRLLARLMLAPLIGALILWLSDQIILWLTRVWMEVSTGSVTALIGAPLLLWLLPRLKSMSAPDMNASDRVAAERRHVLAFAVAGGALLLLATWVALSFGRDAHGWTWASGTLLEELMPWRWPRILAALMAGVMLAVAGCIIQRLTGNPMASPEVLGISSGAAFGVVLMLFLVPGNAFGWLLPAGSLGAAATLLIIMIAAGRGGFSPQRMLLAGMALSTAFTMLLMMLQASGDPRMAEVLTWLSGSTYNATGGQVTRTAIVMVILLAIVPLCRRWLTILPLGGDAARAVGMALTPSRIALLALAACLTATATMTIGPLSFVGLMAPHIARMLGFRRTMPHMVISALAGGVLLVFADWCGRMALFPYQIPAGLLSSFIGAPYFIYLLRKQSR</sequence>
<dbReference type="EMBL" id="AE006468">
    <property type="protein sequence ID" value="AAL19158.1"/>
    <property type="molecule type" value="Genomic_DNA"/>
</dbReference>
<dbReference type="EMBL" id="AF093503">
    <property type="protein sequence ID" value="AAC64151.1"/>
    <property type="molecule type" value="Genomic_DNA"/>
</dbReference>
<dbReference type="RefSeq" id="NP_459199.1">
    <property type="nucleotide sequence ID" value="NC_003197.2"/>
</dbReference>
<dbReference type="RefSeq" id="WP_000088086.1">
    <property type="nucleotide sequence ID" value="NC_003197.2"/>
</dbReference>
<dbReference type="SMR" id="O87656"/>
<dbReference type="STRING" id="99287.STM0194"/>
<dbReference type="PaxDb" id="99287-STM0194"/>
<dbReference type="GeneID" id="1251712"/>
<dbReference type="KEGG" id="stm:STM0194"/>
<dbReference type="PATRIC" id="fig|99287.12.peg.204"/>
<dbReference type="HOGENOM" id="CLU_013016_7_3_6"/>
<dbReference type="PhylomeDB" id="O87656"/>
<dbReference type="BioCyc" id="SENT99287:STM0194-MONOMER"/>
<dbReference type="Proteomes" id="UP000001014">
    <property type="component" value="Chromosome"/>
</dbReference>
<dbReference type="GO" id="GO:0005886">
    <property type="term" value="C:plasma membrane"/>
    <property type="evidence" value="ECO:0000318"/>
    <property type="project" value="GO_Central"/>
</dbReference>
<dbReference type="GO" id="GO:0022857">
    <property type="term" value="F:transmembrane transporter activity"/>
    <property type="evidence" value="ECO:0000318"/>
    <property type="project" value="GO_Central"/>
</dbReference>
<dbReference type="GO" id="GO:0033214">
    <property type="term" value="P:siderophore-dependent iron import into cell"/>
    <property type="evidence" value="ECO:0000318"/>
    <property type="project" value="GO_Central"/>
</dbReference>
<dbReference type="CDD" id="cd06550">
    <property type="entry name" value="TM_ABC_iron-siderophores_like"/>
    <property type="match status" value="2"/>
</dbReference>
<dbReference type="FunFam" id="1.10.3470.10:FF:000011">
    <property type="entry name" value="Fe(3+)-hydroxamate ABC transporter permease FhuB"/>
    <property type="match status" value="1"/>
</dbReference>
<dbReference type="FunFam" id="1.10.3470.10:FF:000013">
    <property type="entry name" value="Fe(3+)-hydroxamate ABC transporter permease FhuB"/>
    <property type="match status" value="1"/>
</dbReference>
<dbReference type="Gene3D" id="1.10.3470.10">
    <property type="entry name" value="ABC transporter involved in vitamin B12 uptake, BtuC"/>
    <property type="match status" value="2"/>
</dbReference>
<dbReference type="InterPro" id="IPR037294">
    <property type="entry name" value="ABC_BtuC-like"/>
</dbReference>
<dbReference type="InterPro" id="IPR000522">
    <property type="entry name" value="ABC_transptr_permease_BtuC"/>
</dbReference>
<dbReference type="NCBIfam" id="NF007865">
    <property type="entry name" value="PRK10577.1-1"/>
    <property type="match status" value="1"/>
</dbReference>
<dbReference type="NCBIfam" id="NF007866">
    <property type="entry name" value="PRK10577.1-2"/>
    <property type="match status" value="1"/>
</dbReference>
<dbReference type="NCBIfam" id="NF007868">
    <property type="entry name" value="PRK10577.1-5"/>
    <property type="match status" value="1"/>
</dbReference>
<dbReference type="PANTHER" id="PTHR30472:SF37">
    <property type="entry name" value="FE(3+) DICITRATE TRANSPORT SYSTEM PERMEASE PROTEIN FECD-RELATED"/>
    <property type="match status" value="1"/>
</dbReference>
<dbReference type="PANTHER" id="PTHR30472">
    <property type="entry name" value="FERRIC ENTEROBACTIN TRANSPORT SYSTEM PERMEASE PROTEIN"/>
    <property type="match status" value="1"/>
</dbReference>
<dbReference type="Pfam" id="PF01032">
    <property type="entry name" value="FecCD"/>
    <property type="match status" value="2"/>
</dbReference>
<dbReference type="SUPFAM" id="SSF81345">
    <property type="entry name" value="ABC transporter involved in vitamin B12 uptake, BtuC"/>
    <property type="match status" value="2"/>
</dbReference>
<gene>
    <name type="primary">fhuB</name>
    <name type="ordered locus">STM0194</name>
</gene>
<evidence type="ECO:0000250" key="1">
    <source>
        <dbReference type="UniProtKB" id="P06972"/>
    </source>
</evidence>
<evidence type="ECO:0000255" key="2"/>
<evidence type="ECO:0000269" key="3">
    <source>
    </source>
</evidence>
<evidence type="ECO:0000305" key="4"/>
<organism>
    <name type="scientific">Salmonella typhimurium (strain LT2 / SGSC1412 / ATCC 700720)</name>
    <dbReference type="NCBI Taxonomy" id="99287"/>
    <lineage>
        <taxon>Bacteria</taxon>
        <taxon>Pseudomonadati</taxon>
        <taxon>Pseudomonadota</taxon>
        <taxon>Gammaproteobacteria</taxon>
        <taxon>Enterobacterales</taxon>
        <taxon>Enterobacteriaceae</taxon>
        <taxon>Salmonella</taxon>
    </lineage>
</organism>
<proteinExistence type="evidence at protein level"/>
<accession>O87656</accession>
<keyword id="KW-0997">Cell inner membrane</keyword>
<keyword id="KW-1003">Cell membrane</keyword>
<keyword id="KW-0406">Ion transport</keyword>
<keyword id="KW-0408">Iron</keyword>
<keyword id="KW-0410">Iron transport</keyword>
<keyword id="KW-0472">Membrane</keyword>
<keyword id="KW-1185">Reference proteome</keyword>
<keyword id="KW-0812">Transmembrane</keyword>
<keyword id="KW-1133">Transmembrane helix</keyword>
<keyword id="KW-0813">Transport</keyword>
<protein>
    <recommendedName>
        <fullName evidence="1">Iron(3+)-hydroxamate import system permease protein FhuB</fullName>
    </recommendedName>
    <alternativeName>
        <fullName evidence="1">Ferric hydroxamate uptake protein B</fullName>
    </alternativeName>
    <alternativeName>
        <fullName evidence="1">Ferrichrome transport system permease protein FhuB</fullName>
    </alternativeName>
    <alternativeName>
        <fullName evidence="1">Ferrichrome uptake protein FhuB</fullName>
    </alternativeName>
    <alternativeName>
        <fullName evidence="1">Iron(III)-hydroxamate import system permease protein FhuB</fullName>
    </alternativeName>
</protein>
<comment type="function">
    <text evidence="1 3">Part of the ABC transporter complex FhuCDB involved in iron(3+)-hydroxamate import. Responsible for the translocation of the substrate across the membrane (By similarity). Involved in ferrioxamine-mediated iron(III) utilization (PubMed:10103258).</text>
</comment>
<comment type="subunit">
    <text evidence="1">The complex is composed of two ATP-binding proteins (FhuC), a transmembrane protein (FhuB) and a solute-binding protein (FhuD).</text>
</comment>
<comment type="subcellular location">
    <subcellularLocation>
        <location evidence="1">Cell inner membrane</location>
        <topology evidence="2">Multi-pass membrane protein</topology>
    </subcellularLocation>
</comment>
<comment type="similarity">
    <text evidence="4">Belongs to the binding-protein-dependent transport system permease family. FecCD subfamily.</text>
</comment>
<name>FHUB_SALTY</name>
<reference key="1">
    <citation type="journal article" date="2001" name="Nature">
        <title>Complete genome sequence of Salmonella enterica serovar Typhimurium LT2.</title>
        <authorList>
            <person name="McClelland M."/>
            <person name="Sanderson K.E."/>
            <person name="Spieth J."/>
            <person name="Clifton S.W."/>
            <person name="Latreille P."/>
            <person name="Courtney L."/>
            <person name="Porwollik S."/>
            <person name="Ali J."/>
            <person name="Dante M."/>
            <person name="Du F."/>
            <person name="Hou S."/>
            <person name="Layman D."/>
            <person name="Leonard S."/>
            <person name="Nguyen C."/>
            <person name="Scott K."/>
            <person name="Holmes A."/>
            <person name="Grewal N."/>
            <person name="Mulvaney E."/>
            <person name="Ryan E."/>
            <person name="Sun H."/>
            <person name="Florea L."/>
            <person name="Miller W."/>
            <person name="Stoneking T."/>
            <person name="Nhan M."/>
            <person name="Waterston R."/>
            <person name="Wilson R.K."/>
        </authorList>
    </citation>
    <scope>NUCLEOTIDE SEQUENCE [LARGE SCALE GENOMIC DNA]</scope>
    <source>
        <strain>LT2 / SGSC1412 / ATCC 700720</strain>
    </source>
</reference>
<reference key="2">
    <citation type="submission" date="1998-09" db="EMBL/GenBank/DDBJ databases">
        <title>Genomic subtraction identifies Salmonella typhimurium prophages and a novel fimbrial operon, stf, which are absent from S. typhi and E. coli.</title>
        <authorList>
            <person name="Emmerth M."/>
            <person name="Goebel W."/>
            <person name="Miller S.I."/>
            <person name="Hueck C.J."/>
        </authorList>
    </citation>
    <scope>NUCLEOTIDE SEQUENCE [GENOMIC DNA] OF 467-685</scope>
    <source>
        <strain>ATCC 14028s / SGSG 2262</strain>
    </source>
</reference>
<reference key="3">
    <citation type="journal article" date="1999" name="Appl. Environ. Microbiol.">
        <title>Ferrioxamine-mediated iron(III) utilization by Salmonella enterica.</title>
        <authorList>
            <person name="Kingsley R.A."/>
            <person name="Reissbrodt R."/>
            <person name="Rabsch W."/>
            <person name="Ketley J.M."/>
            <person name="Tsolis R.M."/>
            <person name="Everest P."/>
            <person name="Dougan G."/>
            <person name="Baeumler A.J."/>
            <person name="Roberts M."/>
            <person name="Williams P.H."/>
        </authorList>
    </citation>
    <scope>FUNCTION IN DESFERRIOXAMINE TRANSPORT</scope>
    <source>
        <strain>ATCC 14028 / SGSG 2980 / CDC 6516-60 / NCTC 12023</strain>
    </source>
</reference>
<feature type="chain" id="PRO_0000060029" description="Iron(3+)-hydroxamate import system permease protein FhuB">
    <location>
        <begin position="1"/>
        <end position="685"/>
    </location>
</feature>
<feature type="transmembrane region" description="Helical" evidence="2">
    <location>
        <begin position="35"/>
        <end position="55"/>
    </location>
</feature>
<feature type="transmembrane region" description="Helical" evidence="2">
    <location>
        <begin position="87"/>
        <end position="107"/>
    </location>
</feature>
<feature type="transmembrane region" description="Helical" evidence="2">
    <location>
        <begin position="120"/>
        <end position="140"/>
    </location>
</feature>
<feature type="transmembrane region" description="Helical" evidence="2">
    <location>
        <begin position="143"/>
        <end position="163"/>
    </location>
</feature>
<feature type="transmembrane region" description="Helical" evidence="2">
    <location>
        <begin position="172"/>
        <end position="192"/>
    </location>
</feature>
<feature type="transmembrane region" description="Helical" evidence="2">
    <location>
        <begin position="222"/>
        <end position="242"/>
    </location>
</feature>
<feature type="transmembrane region" description="Helical" evidence="2">
    <location>
        <begin position="265"/>
        <end position="285"/>
    </location>
</feature>
<feature type="transmembrane region" description="Helical" evidence="2">
    <location>
        <begin position="302"/>
        <end position="322"/>
    </location>
</feature>
<feature type="transmembrane region" description="Helical" evidence="2">
    <location>
        <begin position="328"/>
        <end position="348"/>
    </location>
</feature>
<feature type="transmembrane region" description="Helical" evidence="2">
    <location>
        <begin position="373"/>
        <end position="393"/>
    </location>
</feature>
<feature type="transmembrane region" description="Helical" evidence="2">
    <location>
        <begin position="416"/>
        <end position="436"/>
    </location>
</feature>
<feature type="transmembrane region" description="Helical" evidence="2">
    <location>
        <begin position="456"/>
        <end position="476"/>
    </location>
</feature>
<feature type="transmembrane region" description="Helical" evidence="2">
    <location>
        <begin position="479"/>
        <end position="499"/>
    </location>
</feature>
<feature type="transmembrane region" description="Helical" evidence="2">
    <location>
        <begin position="504"/>
        <end position="524"/>
    </location>
</feature>
<feature type="transmembrane region" description="Helical" evidence="2">
    <location>
        <begin position="553"/>
        <end position="573"/>
    </location>
</feature>
<feature type="transmembrane region" description="Helical" evidence="2">
    <location>
        <begin position="592"/>
        <end position="612"/>
    </location>
</feature>
<feature type="transmembrane region" description="Helical" evidence="2">
    <location>
        <begin position="632"/>
        <end position="652"/>
    </location>
</feature>
<feature type="transmembrane region" description="Helical" evidence="2">
    <location>
        <begin position="660"/>
        <end position="680"/>
    </location>
</feature>
<feature type="sequence conflict" description="In Ref. 2; AAC64151." evidence="4" ref="2">
    <original>NAFGWLLPAG</original>
    <variation>KPSGWYCLAE</variation>
    <location>
        <begin position="470"/>
        <end position="479"/>
    </location>
</feature>
<feature type="sequence conflict" description="In Ref. 2; AAC64151." evidence="4" ref="2">
    <original>AATL</original>
    <variation>RRHW</variation>
    <location>
        <begin position="484"/>
        <end position="487"/>
    </location>
</feature>
<feature type="sequence conflict" description="In Ref. 2; AAC64151." evidence="4" ref="2">
    <original>AE</original>
    <variation>PK</variation>
    <location>
        <begin position="531"/>
        <end position="532"/>
    </location>
</feature>